<name>SMYD4_MOUSE</name>
<keyword id="KW-0025">Alternative splicing</keyword>
<keyword id="KW-0963">Cytoplasm</keyword>
<keyword id="KW-0479">Metal-binding</keyword>
<keyword id="KW-0489">Methyltransferase</keyword>
<keyword id="KW-0539">Nucleus</keyword>
<keyword id="KW-1185">Reference proteome</keyword>
<keyword id="KW-0949">S-adenosyl-L-methionine</keyword>
<keyword id="KW-0808">Transferase</keyword>
<keyword id="KW-0862">Zinc</keyword>
<keyword id="KW-0863">Zinc-finger</keyword>
<accession>Q8BTK5</accession>
<accession>A2BDD0</accession>
<accession>Q3U3Z8</accession>
<accession>Q501N5</accession>
<accession>Q5SWN4</accession>
<accession>Q69Z60</accession>
<accession>Q8BMP3</accession>
<dbReference type="EC" id="2.1.1.-" evidence="3"/>
<dbReference type="EMBL" id="AK030380">
    <property type="protein sequence ID" value="BAC26933.1"/>
    <property type="molecule type" value="mRNA"/>
</dbReference>
<dbReference type="EMBL" id="AK089959">
    <property type="protein sequence ID" value="BAC41013.1"/>
    <property type="molecule type" value="mRNA"/>
</dbReference>
<dbReference type="EMBL" id="AK154507">
    <property type="protein sequence ID" value="BAE32637.1"/>
    <property type="molecule type" value="mRNA"/>
</dbReference>
<dbReference type="EMBL" id="AL591496">
    <property type="status" value="NOT_ANNOTATED_CDS"/>
    <property type="molecule type" value="Genomic_DNA"/>
</dbReference>
<dbReference type="EMBL" id="AL603834">
    <property type="status" value="NOT_ANNOTATED_CDS"/>
    <property type="molecule type" value="Genomic_DNA"/>
</dbReference>
<dbReference type="EMBL" id="BC095952">
    <property type="protein sequence ID" value="AAH95952.1"/>
    <property type="molecule type" value="mRNA"/>
</dbReference>
<dbReference type="EMBL" id="BC130220">
    <property type="protein sequence ID" value="AAI30221.1"/>
    <property type="molecule type" value="mRNA"/>
</dbReference>
<dbReference type="EMBL" id="AK173306">
    <property type="protein sequence ID" value="BAD32584.1"/>
    <property type="molecule type" value="mRNA"/>
</dbReference>
<dbReference type="CCDS" id="CCDS48848.1">
    <molecule id="Q8BTK5-1"/>
</dbReference>
<dbReference type="RefSeq" id="NP_001096081.1">
    <molecule id="Q8BTK5-1"/>
    <property type="nucleotide sequence ID" value="NM_001102611.1"/>
</dbReference>
<dbReference type="RefSeq" id="XP_006533600.1">
    <molecule id="Q8BTK5-2"/>
    <property type="nucleotide sequence ID" value="XM_006533537.5"/>
</dbReference>
<dbReference type="SMR" id="Q8BTK5"/>
<dbReference type="FunCoup" id="Q8BTK5">
    <property type="interactions" value="3452"/>
</dbReference>
<dbReference type="STRING" id="10090.ENSMUSP00000047505"/>
<dbReference type="GlyGen" id="Q8BTK5">
    <property type="glycosylation" value="1 site"/>
</dbReference>
<dbReference type="iPTMnet" id="Q8BTK5"/>
<dbReference type="PhosphoSitePlus" id="Q8BTK5"/>
<dbReference type="PaxDb" id="10090-ENSMUSP00000047505"/>
<dbReference type="ProteomicsDB" id="261382">
    <molecule id="Q8BTK5-1"/>
</dbReference>
<dbReference type="ProteomicsDB" id="261383">
    <molecule id="Q8BTK5-2"/>
</dbReference>
<dbReference type="Antibodypedia" id="22811">
    <property type="antibodies" value="217 antibodies from 28 providers"/>
</dbReference>
<dbReference type="Ensembl" id="ENSMUST00000044530.3">
    <molecule id="Q8BTK5-1"/>
    <property type="protein sequence ID" value="ENSMUSP00000047505.3"/>
    <property type="gene ID" value="ENSMUSG00000018809.3"/>
</dbReference>
<dbReference type="GeneID" id="319822"/>
<dbReference type="KEGG" id="mmu:319822"/>
<dbReference type="UCSC" id="uc007kdm.1">
    <molecule id="Q8BTK5-1"/>
    <property type="organism name" value="mouse"/>
</dbReference>
<dbReference type="AGR" id="MGI:2442796"/>
<dbReference type="CTD" id="114826"/>
<dbReference type="MGI" id="MGI:2442796">
    <property type="gene designation" value="Smyd4"/>
</dbReference>
<dbReference type="VEuPathDB" id="HostDB:ENSMUSG00000018809"/>
<dbReference type="eggNOG" id="KOG2084">
    <property type="taxonomic scope" value="Eukaryota"/>
</dbReference>
<dbReference type="GeneTree" id="ENSGT00730000111079"/>
<dbReference type="HOGENOM" id="CLU_021727_0_0_1"/>
<dbReference type="InParanoid" id="Q8BTK5"/>
<dbReference type="OMA" id="FDCTCPA"/>
<dbReference type="OrthoDB" id="62495at2759"/>
<dbReference type="PhylomeDB" id="Q8BTK5"/>
<dbReference type="TreeFam" id="TF106441"/>
<dbReference type="BioGRID-ORCS" id="319822">
    <property type="hits" value="3 hits in 81 CRISPR screens"/>
</dbReference>
<dbReference type="ChiTaRS" id="Smyd4">
    <property type="organism name" value="mouse"/>
</dbReference>
<dbReference type="PRO" id="PR:Q8BTK5"/>
<dbReference type="Proteomes" id="UP000000589">
    <property type="component" value="Chromosome 11"/>
</dbReference>
<dbReference type="RNAct" id="Q8BTK5">
    <property type="molecule type" value="protein"/>
</dbReference>
<dbReference type="Bgee" id="ENSMUSG00000018809">
    <property type="expression patterns" value="Expressed in ureter smooth muscle and 168 other cell types or tissues"/>
</dbReference>
<dbReference type="GO" id="GO:0005737">
    <property type="term" value="C:cytoplasm"/>
    <property type="evidence" value="ECO:0000314"/>
    <property type="project" value="UniProtKB"/>
</dbReference>
<dbReference type="GO" id="GO:0005634">
    <property type="term" value="C:nucleus"/>
    <property type="evidence" value="ECO:0000314"/>
    <property type="project" value="UniProtKB"/>
</dbReference>
<dbReference type="GO" id="GO:0008168">
    <property type="term" value="F:methyltransferase activity"/>
    <property type="evidence" value="ECO:0007669"/>
    <property type="project" value="UniProtKB-KW"/>
</dbReference>
<dbReference type="GO" id="GO:0008270">
    <property type="term" value="F:zinc ion binding"/>
    <property type="evidence" value="ECO:0007669"/>
    <property type="project" value="UniProtKB-KW"/>
</dbReference>
<dbReference type="GO" id="GO:0007507">
    <property type="term" value="P:heart development"/>
    <property type="evidence" value="ECO:0000250"/>
    <property type="project" value="UniProtKB"/>
</dbReference>
<dbReference type="GO" id="GO:0032259">
    <property type="term" value="P:methylation"/>
    <property type="evidence" value="ECO:0007669"/>
    <property type="project" value="UniProtKB-KW"/>
</dbReference>
<dbReference type="CDD" id="cd10536">
    <property type="entry name" value="SET_SMYD4"/>
    <property type="match status" value="1"/>
</dbReference>
<dbReference type="Gene3D" id="6.10.140.2220">
    <property type="match status" value="1"/>
</dbReference>
<dbReference type="Gene3D" id="2.170.270.10">
    <property type="entry name" value="SET domain"/>
    <property type="match status" value="1"/>
</dbReference>
<dbReference type="Gene3D" id="1.25.40.10">
    <property type="entry name" value="Tetratricopeptide repeat domain"/>
    <property type="match status" value="2"/>
</dbReference>
<dbReference type="InterPro" id="IPR052097">
    <property type="entry name" value="SET-MYND_domain_protein"/>
</dbReference>
<dbReference type="InterPro" id="IPR001214">
    <property type="entry name" value="SET_dom"/>
</dbReference>
<dbReference type="InterPro" id="IPR046341">
    <property type="entry name" value="SET_dom_sf"/>
</dbReference>
<dbReference type="InterPro" id="IPR044421">
    <property type="entry name" value="SMYD4_SET"/>
</dbReference>
<dbReference type="InterPro" id="IPR011990">
    <property type="entry name" value="TPR-like_helical_dom_sf"/>
</dbReference>
<dbReference type="InterPro" id="IPR002893">
    <property type="entry name" value="Znf_MYND"/>
</dbReference>
<dbReference type="PANTHER" id="PTHR46165">
    <property type="entry name" value="SET AND MYND DOMAIN-CONTAINING PROTEIN 4"/>
    <property type="match status" value="1"/>
</dbReference>
<dbReference type="PANTHER" id="PTHR46165:SF2">
    <property type="entry name" value="SET AND MYND DOMAIN-CONTAINING PROTEIN 4"/>
    <property type="match status" value="1"/>
</dbReference>
<dbReference type="Pfam" id="PF00856">
    <property type="entry name" value="SET"/>
    <property type="match status" value="1"/>
</dbReference>
<dbReference type="Pfam" id="PF01753">
    <property type="entry name" value="zf-MYND"/>
    <property type="match status" value="1"/>
</dbReference>
<dbReference type="SUPFAM" id="SSF144232">
    <property type="entry name" value="HIT/MYND zinc finger-like"/>
    <property type="match status" value="1"/>
</dbReference>
<dbReference type="SUPFAM" id="SSF82199">
    <property type="entry name" value="SET domain"/>
    <property type="match status" value="1"/>
</dbReference>
<dbReference type="SUPFAM" id="SSF48452">
    <property type="entry name" value="TPR-like"/>
    <property type="match status" value="2"/>
</dbReference>
<dbReference type="PROSITE" id="PS50280">
    <property type="entry name" value="SET"/>
    <property type="match status" value="1"/>
</dbReference>
<dbReference type="PROSITE" id="PS01360">
    <property type="entry name" value="ZF_MYND_1"/>
    <property type="match status" value="1"/>
</dbReference>
<dbReference type="PROSITE" id="PS50865">
    <property type="entry name" value="ZF_MYND_2"/>
    <property type="match status" value="1"/>
</dbReference>
<protein>
    <recommendedName>
        <fullName>Protein-lysine N-methyltransferase SMYD4</fullName>
        <ecNumber evidence="3">2.1.1.-</ecNumber>
    </recommendedName>
    <alternativeName>
        <fullName>SET and MYND domain-containing protein 4</fullName>
    </alternativeName>
</protein>
<gene>
    <name type="primary">Smyd4</name>
    <name type="synonym">Kiaa1936</name>
</gene>
<feature type="chain" id="PRO_0000227785" description="Protein-lysine N-methyltransferase SMYD4">
    <location>
        <begin position="1"/>
        <end position="799"/>
    </location>
</feature>
<feature type="domain" description="SET" evidence="6">
    <location>
        <begin position="233"/>
        <end position="570"/>
    </location>
</feature>
<feature type="zinc finger region" description="MYND-type" evidence="5">
    <location>
        <begin position="296"/>
        <end position="335"/>
    </location>
</feature>
<feature type="binding site" evidence="1">
    <location>
        <begin position="112"/>
        <end position="114"/>
    </location>
    <ligand>
        <name>S-adenosyl-L-methionine</name>
        <dbReference type="ChEBI" id="CHEBI:59789"/>
    </ligand>
</feature>
<feature type="binding site" evidence="5">
    <location>
        <position position="296"/>
    </location>
    <ligand>
        <name>Zn(2+)</name>
        <dbReference type="ChEBI" id="CHEBI:29105"/>
        <label>1</label>
    </ligand>
</feature>
<feature type="binding site" evidence="5">
    <location>
        <position position="299"/>
    </location>
    <ligand>
        <name>Zn(2+)</name>
        <dbReference type="ChEBI" id="CHEBI:29105"/>
        <label>1</label>
    </ligand>
</feature>
<feature type="binding site" evidence="5">
    <location>
        <position position="309"/>
    </location>
    <ligand>
        <name>Zn(2+)</name>
        <dbReference type="ChEBI" id="CHEBI:29105"/>
        <label>2</label>
    </ligand>
</feature>
<feature type="binding site" evidence="5">
    <location>
        <position position="312"/>
    </location>
    <ligand>
        <name>Zn(2+)</name>
        <dbReference type="ChEBI" id="CHEBI:29105"/>
        <label>2</label>
    </ligand>
</feature>
<feature type="binding site" evidence="5">
    <location>
        <position position="318"/>
    </location>
    <ligand>
        <name>Zn(2+)</name>
        <dbReference type="ChEBI" id="CHEBI:29105"/>
        <label>1</label>
    </ligand>
</feature>
<feature type="binding site" evidence="5">
    <location>
        <position position="322"/>
    </location>
    <ligand>
        <name>Zn(2+)</name>
        <dbReference type="ChEBI" id="CHEBI:29105"/>
        <label>1</label>
    </ligand>
</feature>
<feature type="binding site" evidence="5">
    <location>
        <position position="331"/>
    </location>
    <ligand>
        <name>Zn(2+)</name>
        <dbReference type="ChEBI" id="CHEBI:29105"/>
        <label>2</label>
    </ligand>
</feature>
<feature type="binding site" evidence="5">
    <location>
        <position position="335"/>
    </location>
    <ligand>
        <name>Zn(2+)</name>
        <dbReference type="ChEBI" id="CHEBI:29105"/>
        <label>2</label>
    </ligand>
</feature>
<feature type="binding site" evidence="4">
    <location>
        <begin position="535"/>
        <end position="536"/>
    </location>
    <ligand>
        <name>S-adenosyl-L-methionine</name>
        <dbReference type="ChEBI" id="CHEBI:59789"/>
    </ligand>
</feature>
<feature type="binding site" evidence="6">
    <location>
        <position position="569"/>
    </location>
    <ligand>
        <name>S-adenosyl-L-methionine</name>
        <dbReference type="ChEBI" id="CHEBI:59789"/>
    </ligand>
</feature>
<feature type="binding site" evidence="6">
    <location>
        <position position="591"/>
    </location>
    <ligand>
        <name>S-adenosyl-L-methionine</name>
        <dbReference type="ChEBI" id="CHEBI:59789"/>
    </ligand>
</feature>
<feature type="splice variant" id="VSP_017580" description="In isoform 2." evidence="9 10">
    <location>
        <begin position="1"/>
        <end position="133"/>
    </location>
</feature>
<feature type="sequence variant" description="In strain: Czech II." evidence="7">
    <original>N</original>
    <variation>Y</variation>
    <location>
        <position position="65"/>
    </location>
</feature>
<feature type="sequence variant" description="In strain: Czech II." evidence="7">
    <original>I</original>
    <variation>V</variation>
    <location>
        <position position="208"/>
    </location>
</feature>
<feature type="sequence variant" description="In strain: Czech II." evidence="7">
    <original>T</original>
    <variation>K</variation>
    <location>
        <position position="226"/>
    </location>
</feature>
<feature type="sequence variant" description="In strain: Czech II." evidence="7">
    <original>G</original>
    <variation>E</variation>
    <location>
        <position position="397"/>
    </location>
</feature>
<feature type="sequence variant" description="In strain: Czech II." evidence="7">
    <original>D</original>
    <variation>A</variation>
    <location>
        <position position="458"/>
    </location>
</feature>
<feature type="sequence variant" description="In strain: Czech II." evidence="7">
    <original>A</original>
    <variation>T</variation>
    <location>
        <position position="486"/>
    </location>
</feature>
<feature type="sequence variant" description="In strain: Czech II." evidence="7">
    <original>I</original>
    <variation>V</variation>
    <location>
        <position position="527"/>
    </location>
</feature>
<feature type="sequence variant" description="In strain: Czech II." evidence="7">
    <original>V</original>
    <variation>I</variation>
    <location>
        <position position="553"/>
    </location>
</feature>
<feature type="sequence conflict" description="In Ref. 1; BAC26933." evidence="11" ref="1">
    <original>V</original>
    <variation>D</variation>
    <location>
        <position position="363"/>
    </location>
</feature>
<feature type="sequence conflict" description="In Ref. 1; BAC41013." evidence="11" ref="1">
    <original>V</original>
    <variation>I</variation>
    <location>
        <position position="374"/>
    </location>
</feature>
<feature type="sequence conflict" description="In Ref. 1; BAC26933." evidence="11" ref="1">
    <original>A</original>
    <variation>P</variation>
    <location>
        <position position="751"/>
    </location>
</feature>
<comment type="function">
    <text evidence="2 3">Protein-lysine N-methyltransferase. Monomethylates PRMT5, modulating its transcriptional activity (By similarity). May also act as a histone methyltransferase (By similarity). Plays a critical role in cardiac development. Acts as a key epigenetic regulator of gene expression during cardiac development via its dual activities as a methyltransferase and negative regulator of HDAC1 (By similarity).</text>
</comment>
<comment type="catalytic activity">
    <reaction evidence="3">
        <text>L-lysyl-[protein] + S-adenosyl-L-methionine = N(6)-methyl-L-lysyl-[protein] + S-adenosyl-L-homocysteine + H(+)</text>
        <dbReference type="Rhea" id="RHEA:51736"/>
        <dbReference type="Rhea" id="RHEA-COMP:9752"/>
        <dbReference type="Rhea" id="RHEA-COMP:13053"/>
        <dbReference type="ChEBI" id="CHEBI:15378"/>
        <dbReference type="ChEBI" id="CHEBI:29969"/>
        <dbReference type="ChEBI" id="CHEBI:57856"/>
        <dbReference type="ChEBI" id="CHEBI:59789"/>
        <dbReference type="ChEBI" id="CHEBI:61929"/>
    </reaction>
</comment>
<comment type="subunit">
    <text evidence="3">Interacts (via MYND-type zinc finger) with HDAC1.</text>
</comment>
<comment type="subcellular location">
    <subcellularLocation>
        <location evidence="8">Nucleus</location>
    </subcellularLocation>
    <subcellularLocation>
        <location evidence="8">Cytoplasm</location>
    </subcellularLocation>
</comment>
<comment type="alternative products">
    <event type="alternative splicing"/>
    <isoform>
        <id>Q8BTK5-1</id>
        <name>1</name>
        <sequence type="displayed"/>
    </isoform>
    <isoform>
        <id>Q8BTK5-2</id>
        <name>2</name>
        <sequence type="described" ref="VSP_017580"/>
    </isoform>
</comment>
<comment type="similarity">
    <text evidence="6">Belongs to the class V-like SAM-binding methyltransferase superfamily.</text>
</comment>
<evidence type="ECO:0000250" key="1"/>
<evidence type="ECO:0000250" key="2">
    <source>
        <dbReference type="UniProtKB" id="Q08C84"/>
    </source>
</evidence>
<evidence type="ECO:0000250" key="3">
    <source>
        <dbReference type="UniProtKB" id="Q8IYR2"/>
    </source>
</evidence>
<evidence type="ECO:0000250" key="4">
    <source>
        <dbReference type="UniProtKB" id="Q9H7B4"/>
    </source>
</evidence>
<evidence type="ECO:0000255" key="5">
    <source>
        <dbReference type="PROSITE-ProRule" id="PRU00134"/>
    </source>
</evidence>
<evidence type="ECO:0000255" key="6">
    <source>
        <dbReference type="PROSITE-ProRule" id="PRU00190"/>
    </source>
</evidence>
<evidence type="ECO:0000269" key="7">
    <source>
    </source>
</evidence>
<evidence type="ECO:0000269" key="8">
    <source>
    </source>
</evidence>
<evidence type="ECO:0000303" key="9">
    <source>
    </source>
</evidence>
<evidence type="ECO:0000303" key="10">
    <source>
    </source>
</evidence>
<evidence type="ECO:0000305" key="11"/>
<organism>
    <name type="scientific">Mus musculus</name>
    <name type="common">Mouse</name>
    <dbReference type="NCBI Taxonomy" id="10090"/>
    <lineage>
        <taxon>Eukaryota</taxon>
        <taxon>Metazoa</taxon>
        <taxon>Chordata</taxon>
        <taxon>Craniata</taxon>
        <taxon>Vertebrata</taxon>
        <taxon>Euteleostomi</taxon>
        <taxon>Mammalia</taxon>
        <taxon>Eutheria</taxon>
        <taxon>Euarchontoglires</taxon>
        <taxon>Glires</taxon>
        <taxon>Rodentia</taxon>
        <taxon>Myomorpha</taxon>
        <taxon>Muroidea</taxon>
        <taxon>Muridae</taxon>
        <taxon>Murinae</taxon>
        <taxon>Mus</taxon>
        <taxon>Mus</taxon>
    </lineage>
</organism>
<sequence length="799" mass="88538">MDLPVDEWKSYLLKKWASLPKSVQDTISTAETLSDIFLPSSSLLQPEDEMFLKELSSSYSVEKDNDAPLFYREEGNRKFQEKEYTDAAVLYSKGVSHSRPNTEDISLCYANRSAALFHLGQYEACLKDIVEAGMHGYPERLQPKMMVRKTECLVNLGRLQEARQTISDLESSLTAKPTLVLSSYQILQRNVQHLKIKIQEKETLPEPIPAALTNAFEDIALGEENTQISGASLSVSLCTHPLKGRHLVATKDILPGELLVKEDAFVSVLIPGEMPRPHHCLENKWDTRVTSGDLYCHRCLKHTLATVPCGSCSYAKYCSQECMQQAWDLYHSTECSLGGLLLTLGVFCHVALRMTLLARFEDVDRVVRMLCDEVGSTDTCLPESKNLVKAFDYTSQGESEEKSKIGEPPIPGCNVNGKYGSNYNAIFSLLPHTEKHSPEHRFICAISVSALCRQLKADSVQAQTLKSPKLKAVTPGLCADLTVWGAAMLRHMLQLQCNAQAITSICHTGSNESIITNSRQIRLATGIFPVVSLLNHSCRPNTSVSFTGTVATVRAAQRIAKGQEILHCYGPHESRMGVAERQQRLSSQYFFDCRCGACHAETLRAAAAPRWEAFCCKTCRALMQGNDVLSCSNESCTNSVSRDQLVSRLQDLQQQVCMAQKLLRTGKPEQAIQQLLRCREAAESFLSAEHTVLGEIEDGLAQAHATLGNWLKSAAHVQKSLQVVETRHGPSSVEIGHELFKLAQVLFNGLAVPEALSAIWKAERILLVHCGPESEEVRELREMRSCLLDSSFVPVGPLV</sequence>
<reference key="1">
    <citation type="journal article" date="2005" name="Science">
        <title>The transcriptional landscape of the mammalian genome.</title>
        <authorList>
            <person name="Carninci P."/>
            <person name="Kasukawa T."/>
            <person name="Katayama S."/>
            <person name="Gough J."/>
            <person name="Frith M.C."/>
            <person name="Maeda N."/>
            <person name="Oyama R."/>
            <person name="Ravasi T."/>
            <person name="Lenhard B."/>
            <person name="Wells C."/>
            <person name="Kodzius R."/>
            <person name="Shimokawa K."/>
            <person name="Bajic V.B."/>
            <person name="Brenner S.E."/>
            <person name="Batalov S."/>
            <person name="Forrest A.R."/>
            <person name="Zavolan M."/>
            <person name="Davis M.J."/>
            <person name="Wilming L.G."/>
            <person name="Aidinis V."/>
            <person name="Allen J.E."/>
            <person name="Ambesi-Impiombato A."/>
            <person name="Apweiler R."/>
            <person name="Aturaliya R.N."/>
            <person name="Bailey T.L."/>
            <person name="Bansal M."/>
            <person name="Baxter L."/>
            <person name="Beisel K.W."/>
            <person name="Bersano T."/>
            <person name="Bono H."/>
            <person name="Chalk A.M."/>
            <person name="Chiu K.P."/>
            <person name="Choudhary V."/>
            <person name="Christoffels A."/>
            <person name="Clutterbuck D.R."/>
            <person name="Crowe M.L."/>
            <person name="Dalla E."/>
            <person name="Dalrymple B.P."/>
            <person name="de Bono B."/>
            <person name="Della Gatta G."/>
            <person name="di Bernardo D."/>
            <person name="Down T."/>
            <person name="Engstrom P."/>
            <person name="Fagiolini M."/>
            <person name="Faulkner G."/>
            <person name="Fletcher C.F."/>
            <person name="Fukushima T."/>
            <person name="Furuno M."/>
            <person name="Futaki S."/>
            <person name="Gariboldi M."/>
            <person name="Georgii-Hemming P."/>
            <person name="Gingeras T.R."/>
            <person name="Gojobori T."/>
            <person name="Green R.E."/>
            <person name="Gustincich S."/>
            <person name="Harbers M."/>
            <person name="Hayashi Y."/>
            <person name="Hensch T.K."/>
            <person name="Hirokawa N."/>
            <person name="Hill D."/>
            <person name="Huminiecki L."/>
            <person name="Iacono M."/>
            <person name="Ikeo K."/>
            <person name="Iwama A."/>
            <person name="Ishikawa T."/>
            <person name="Jakt M."/>
            <person name="Kanapin A."/>
            <person name="Katoh M."/>
            <person name="Kawasawa Y."/>
            <person name="Kelso J."/>
            <person name="Kitamura H."/>
            <person name="Kitano H."/>
            <person name="Kollias G."/>
            <person name="Krishnan S.P."/>
            <person name="Kruger A."/>
            <person name="Kummerfeld S.K."/>
            <person name="Kurochkin I.V."/>
            <person name="Lareau L.F."/>
            <person name="Lazarevic D."/>
            <person name="Lipovich L."/>
            <person name="Liu J."/>
            <person name="Liuni S."/>
            <person name="McWilliam S."/>
            <person name="Madan Babu M."/>
            <person name="Madera M."/>
            <person name="Marchionni L."/>
            <person name="Matsuda H."/>
            <person name="Matsuzawa S."/>
            <person name="Miki H."/>
            <person name="Mignone F."/>
            <person name="Miyake S."/>
            <person name="Morris K."/>
            <person name="Mottagui-Tabar S."/>
            <person name="Mulder N."/>
            <person name="Nakano N."/>
            <person name="Nakauchi H."/>
            <person name="Ng P."/>
            <person name="Nilsson R."/>
            <person name="Nishiguchi S."/>
            <person name="Nishikawa S."/>
            <person name="Nori F."/>
            <person name="Ohara O."/>
            <person name="Okazaki Y."/>
            <person name="Orlando V."/>
            <person name="Pang K.C."/>
            <person name="Pavan W.J."/>
            <person name="Pavesi G."/>
            <person name="Pesole G."/>
            <person name="Petrovsky N."/>
            <person name="Piazza S."/>
            <person name="Reed J."/>
            <person name="Reid J.F."/>
            <person name="Ring B.Z."/>
            <person name="Ringwald M."/>
            <person name="Rost B."/>
            <person name="Ruan Y."/>
            <person name="Salzberg S.L."/>
            <person name="Sandelin A."/>
            <person name="Schneider C."/>
            <person name="Schoenbach C."/>
            <person name="Sekiguchi K."/>
            <person name="Semple C.A."/>
            <person name="Seno S."/>
            <person name="Sessa L."/>
            <person name="Sheng Y."/>
            <person name="Shibata Y."/>
            <person name="Shimada H."/>
            <person name="Shimada K."/>
            <person name="Silva D."/>
            <person name="Sinclair B."/>
            <person name="Sperling S."/>
            <person name="Stupka E."/>
            <person name="Sugiura K."/>
            <person name="Sultana R."/>
            <person name="Takenaka Y."/>
            <person name="Taki K."/>
            <person name="Tammoja K."/>
            <person name="Tan S.L."/>
            <person name="Tang S."/>
            <person name="Taylor M.S."/>
            <person name="Tegner J."/>
            <person name="Teichmann S.A."/>
            <person name="Ueda H.R."/>
            <person name="van Nimwegen E."/>
            <person name="Verardo R."/>
            <person name="Wei C.L."/>
            <person name="Yagi K."/>
            <person name="Yamanishi H."/>
            <person name="Zabarovsky E."/>
            <person name="Zhu S."/>
            <person name="Zimmer A."/>
            <person name="Hide W."/>
            <person name="Bult C."/>
            <person name="Grimmond S.M."/>
            <person name="Teasdale R.D."/>
            <person name="Liu E.T."/>
            <person name="Brusic V."/>
            <person name="Quackenbush J."/>
            <person name="Wahlestedt C."/>
            <person name="Mattick J.S."/>
            <person name="Hume D.A."/>
            <person name="Kai C."/>
            <person name="Sasaki D."/>
            <person name="Tomaru Y."/>
            <person name="Fukuda S."/>
            <person name="Kanamori-Katayama M."/>
            <person name="Suzuki M."/>
            <person name="Aoki J."/>
            <person name="Arakawa T."/>
            <person name="Iida J."/>
            <person name="Imamura K."/>
            <person name="Itoh M."/>
            <person name="Kato T."/>
            <person name="Kawaji H."/>
            <person name="Kawagashira N."/>
            <person name="Kawashima T."/>
            <person name="Kojima M."/>
            <person name="Kondo S."/>
            <person name="Konno H."/>
            <person name="Nakano K."/>
            <person name="Ninomiya N."/>
            <person name="Nishio T."/>
            <person name="Okada M."/>
            <person name="Plessy C."/>
            <person name="Shibata K."/>
            <person name="Shiraki T."/>
            <person name="Suzuki S."/>
            <person name="Tagami M."/>
            <person name="Waki K."/>
            <person name="Watahiki A."/>
            <person name="Okamura-Oho Y."/>
            <person name="Suzuki H."/>
            <person name="Kawai J."/>
            <person name="Hayashizaki Y."/>
        </authorList>
    </citation>
    <scope>NUCLEOTIDE SEQUENCE [LARGE SCALE MRNA] (ISOFORMS 1 AND 2)</scope>
    <source>
        <strain>C57BL/6J</strain>
        <strain>NOD</strain>
        <tissue>Dendritic cell</tissue>
        <tissue>Pituitary</tissue>
    </source>
</reference>
<reference key="2">
    <citation type="journal article" date="2009" name="PLoS Biol.">
        <title>Lineage-specific biology revealed by a finished genome assembly of the mouse.</title>
        <authorList>
            <person name="Church D.M."/>
            <person name="Goodstadt L."/>
            <person name="Hillier L.W."/>
            <person name="Zody M.C."/>
            <person name="Goldstein S."/>
            <person name="She X."/>
            <person name="Bult C.J."/>
            <person name="Agarwala R."/>
            <person name="Cherry J.L."/>
            <person name="DiCuccio M."/>
            <person name="Hlavina W."/>
            <person name="Kapustin Y."/>
            <person name="Meric P."/>
            <person name="Maglott D."/>
            <person name="Birtle Z."/>
            <person name="Marques A.C."/>
            <person name="Graves T."/>
            <person name="Zhou S."/>
            <person name="Teague B."/>
            <person name="Potamousis K."/>
            <person name="Churas C."/>
            <person name="Place M."/>
            <person name="Herschleb J."/>
            <person name="Runnheim R."/>
            <person name="Forrest D."/>
            <person name="Amos-Landgraf J."/>
            <person name="Schwartz D.C."/>
            <person name="Cheng Z."/>
            <person name="Lindblad-Toh K."/>
            <person name="Eichler E.E."/>
            <person name="Ponting C.P."/>
        </authorList>
    </citation>
    <scope>NUCLEOTIDE SEQUENCE [LARGE SCALE GENOMIC DNA]</scope>
    <source>
        <strain>C57BL/6J</strain>
    </source>
</reference>
<reference key="3">
    <citation type="journal article" date="2004" name="Genome Res.">
        <title>The status, quality, and expansion of the NIH full-length cDNA project: the Mammalian Gene Collection (MGC).</title>
        <authorList>
            <consortium name="The MGC Project Team"/>
        </authorList>
    </citation>
    <scope>NUCLEOTIDE SEQUENCE [LARGE SCALE MRNA] (ISOFORMS 1 AND 2)</scope>
    <scope>VARIANTS TYR-65; VAL-208; LYS-226; GLU-397; ALA-458; THR-486; VAL-527 AND ILE-553</scope>
    <source>
        <strain>Czech II</strain>
        <tissue>Mammary tumor</tissue>
    </source>
</reference>
<reference key="4">
    <citation type="journal article" date="2004" name="DNA Res.">
        <title>Prediction of the coding sequences of mouse homologues of KIAA gene: IV. The complete nucleotide sequences of 500 mouse KIAA-homologous cDNAs identified by screening of terminal sequences of cDNA clones randomly sampled from size-fractionated libraries.</title>
        <authorList>
            <person name="Okazaki N."/>
            <person name="Kikuno R."/>
            <person name="Ohara R."/>
            <person name="Inamoto S."/>
            <person name="Koseki H."/>
            <person name="Hiraoka S."/>
            <person name="Saga Y."/>
            <person name="Seino S."/>
            <person name="Nishimura M."/>
            <person name="Kaisho T."/>
            <person name="Hoshino K."/>
            <person name="Kitamura H."/>
            <person name="Nagase T."/>
            <person name="Ohara O."/>
            <person name="Koga H."/>
        </authorList>
    </citation>
    <scope>NUCLEOTIDE SEQUENCE [LARGE SCALE MRNA] OF 84-799 (ISOFORM 1)</scope>
    <source>
        <tissue>Embryonic intestine</tissue>
    </source>
</reference>
<reference key="5">
    <citation type="journal article" date="2018" name="PLoS Genet.">
        <title>The roles of SMYD4 in epigenetic regulation of cardiac development in zebrafish.</title>
        <authorList>
            <person name="Xiao D."/>
            <person name="Wang H."/>
            <person name="Hao L."/>
            <person name="Guo X."/>
            <person name="Ma X."/>
            <person name="Qian Y."/>
            <person name="Chen H."/>
            <person name="Ma J."/>
            <person name="Zhang J."/>
            <person name="Sheng W."/>
            <person name="Shou W."/>
            <person name="Huang G."/>
            <person name="Ma D."/>
        </authorList>
    </citation>
    <scope>SUBCELLULAR LOCATION</scope>
</reference>
<proteinExistence type="evidence at transcript level"/>